<comment type="function">
    <text evidence="1">Catalyzes the conversion of (8S)-3',8-cyclo-7,8-dihydroguanosine 5'-triphosphate to cyclic pyranopterin monophosphate (cPMP).</text>
</comment>
<comment type="catalytic activity">
    <reaction evidence="1">
        <text>(8S)-3',8-cyclo-7,8-dihydroguanosine 5'-triphosphate = cyclic pyranopterin phosphate + diphosphate</text>
        <dbReference type="Rhea" id="RHEA:49580"/>
        <dbReference type="ChEBI" id="CHEBI:33019"/>
        <dbReference type="ChEBI" id="CHEBI:59648"/>
        <dbReference type="ChEBI" id="CHEBI:131766"/>
        <dbReference type="EC" id="4.6.1.17"/>
    </reaction>
</comment>
<comment type="pathway">
    <text evidence="1">Cofactor biosynthesis; molybdopterin biosynthesis.</text>
</comment>
<comment type="subunit">
    <text evidence="1">Homohexamer; trimer of dimers.</text>
</comment>
<comment type="similarity">
    <text evidence="1">Belongs to the MoaC family.</text>
</comment>
<name>MOAC3_MYCTU</name>
<sequence length="177" mass="18555">MNDHDGVLTHLDEQGAARMVDVSAKAVTLRRARASGAVLMKPSTLDMICHGTAAKGDVIATARIAGIMAAKRTGELIPLCHPLGIEAVTVTLEPQGADRLSIAATVTTVARTGVEMEALTAVTVTALTVYDMCKAVDRAMTITDIRLDEKSGGRSGHYRRHDADVKPSDGGSTEDGC</sequence>
<reference key="1">
    <citation type="journal article" date="1998" name="Nature">
        <title>Deciphering the biology of Mycobacterium tuberculosis from the complete genome sequence.</title>
        <authorList>
            <person name="Cole S.T."/>
            <person name="Brosch R."/>
            <person name="Parkhill J."/>
            <person name="Garnier T."/>
            <person name="Churcher C.M."/>
            <person name="Harris D.E."/>
            <person name="Gordon S.V."/>
            <person name="Eiglmeier K."/>
            <person name="Gas S."/>
            <person name="Barry C.E. III"/>
            <person name="Tekaia F."/>
            <person name="Badcock K."/>
            <person name="Basham D."/>
            <person name="Brown D."/>
            <person name="Chillingworth T."/>
            <person name="Connor R."/>
            <person name="Davies R.M."/>
            <person name="Devlin K."/>
            <person name="Feltwell T."/>
            <person name="Gentles S."/>
            <person name="Hamlin N."/>
            <person name="Holroyd S."/>
            <person name="Hornsby T."/>
            <person name="Jagels K."/>
            <person name="Krogh A."/>
            <person name="McLean J."/>
            <person name="Moule S."/>
            <person name="Murphy L.D."/>
            <person name="Oliver S."/>
            <person name="Osborne J."/>
            <person name="Quail M.A."/>
            <person name="Rajandream M.A."/>
            <person name="Rogers J."/>
            <person name="Rutter S."/>
            <person name="Seeger K."/>
            <person name="Skelton S."/>
            <person name="Squares S."/>
            <person name="Squares R."/>
            <person name="Sulston J.E."/>
            <person name="Taylor K."/>
            <person name="Whitehead S."/>
            <person name="Barrell B.G."/>
        </authorList>
    </citation>
    <scope>NUCLEOTIDE SEQUENCE [LARGE SCALE GENOMIC DNA]</scope>
    <source>
        <strain>ATCC 25618 / H37Rv</strain>
    </source>
</reference>
<evidence type="ECO:0000255" key="1">
    <source>
        <dbReference type="HAMAP-Rule" id="MF_01224"/>
    </source>
</evidence>
<evidence type="ECO:0000256" key="2">
    <source>
        <dbReference type="SAM" id="MobiDB-lite"/>
    </source>
</evidence>
<accession>P9WJR5</accession>
<accession>L0TFA4</accession>
<accession>O53376</accession>
<accession>P65392</accession>
<organism>
    <name type="scientific">Mycobacterium tuberculosis (strain ATCC 25618 / H37Rv)</name>
    <dbReference type="NCBI Taxonomy" id="83332"/>
    <lineage>
        <taxon>Bacteria</taxon>
        <taxon>Bacillati</taxon>
        <taxon>Actinomycetota</taxon>
        <taxon>Actinomycetes</taxon>
        <taxon>Mycobacteriales</taxon>
        <taxon>Mycobacteriaceae</taxon>
        <taxon>Mycobacterium</taxon>
        <taxon>Mycobacterium tuberculosis complex</taxon>
    </lineage>
</organism>
<gene>
    <name type="primary">moaC3</name>
    <name type="ordered locus">Rv3324c</name>
    <name type="ORF">MTV016.24c</name>
</gene>
<feature type="chain" id="PRO_0000097814" description="Cyclic pyranopterin monophosphate synthase 3">
    <location>
        <begin position="1"/>
        <end position="177"/>
    </location>
</feature>
<feature type="region of interest" description="Disordered" evidence="2">
    <location>
        <begin position="150"/>
        <end position="177"/>
    </location>
</feature>
<feature type="active site" evidence="1">
    <location>
        <position position="131"/>
    </location>
</feature>
<feature type="binding site" evidence="1">
    <location>
        <begin position="79"/>
        <end position="81"/>
    </location>
    <ligand>
        <name>substrate</name>
    </ligand>
</feature>
<feature type="binding site" evidence="1">
    <location>
        <begin position="116"/>
        <end position="117"/>
    </location>
    <ligand>
        <name>substrate</name>
    </ligand>
</feature>
<protein>
    <recommendedName>
        <fullName evidence="1">Cyclic pyranopterin monophosphate synthase 3</fullName>
        <ecNumber evidence="1">4.6.1.17</ecNumber>
    </recommendedName>
    <alternativeName>
        <fullName evidence="1">Molybdenum cofactor biosynthesis protein C 3</fullName>
    </alternativeName>
</protein>
<dbReference type="EC" id="4.6.1.17" evidence="1"/>
<dbReference type="EMBL" id="AL123456">
    <property type="protein sequence ID" value="CCP46144.1"/>
    <property type="molecule type" value="Genomic_DNA"/>
</dbReference>
<dbReference type="PIR" id="C70844">
    <property type="entry name" value="C70844"/>
</dbReference>
<dbReference type="RefSeq" id="NP_217841.3">
    <property type="nucleotide sequence ID" value="NC_000962.3"/>
</dbReference>
<dbReference type="SMR" id="P9WJR5"/>
<dbReference type="FunCoup" id="P9WJR5">
    <property type="interactions" value="162"/>
</dbReference>
<dbReference type="STRING" id="83332.Rv3324c"/>
<dbReference type="PaxDb" id="83332-Rv3324c"/>
<dbReference type="DNASU" id="887981"/>
<dbReference type="GeneID" id="887981"/>
<dbReference type="KEGG" id="mtu:Rv3324c"/>
<dbReference type="KEGG" id="mtv:RVBD_3324c"/>
<dbReference type="TubercuList" id="Rv3324c"/>
<dbReference type="eggNOG" id="COG0315">
    <property type="taxonomic scope" value="Bacteria"/>
</dbReference>
<dbReference type="InParanoid" id="P9WJR5"/>
<dbReference type="OrthoDB" id="9794429at2"/>
<dbReference type="UniPathway" id="UPA00344"/>
<dbReference type="Proteomes" id="UP000001584">
    <property type="component" value="Chromosome"/>
</dbReference>
<dbReference type="GO" id="GO:0061799">
    <property type="term" value="F:cyclic pyranopterin monophosphate synthase activity"/>
    <property type="evidence" value="ECO:0007669"/>
    <property type="project" value="UniProtKB-UniRule"/>
</dbReference>
<dbReference type="GO" id="GO:0006777">
    <property type="term" value="P:Mo-molybdopterin cofactor biosynthetic process"/>
    <property type="evidence" value="ECO:0007669"/>
    <property type="project" value="UniProtKB-UniRule"/>
</dbReference>
<dbReference type="CDD" id="cd01420">
    <property type="entry name" value="MoaC_PE"/>
    <property type="match status" value="1"/>
</dbReference>
<dbReference type="Gene3D" id="3.30.70.640">
    <property type="entry name" value="Molybdopterin cofactor biosynthesis C (MoaC) domain"/>
    <property type="match status" value="1"/>
</dbReference>
<dbReference type="HAMAP" id="MF_01224_B">
    <property type="entry name" value="MoaC_B"/>
    <property type="match status" value="1"/>
</dbReference>
<dbReference type="InterPro" id="IPR023045">
    <property type="entry name" value="MoaC"/>
</dbReference>
<dbReference type="InterPro" id="IPR047594">
    <property type="entry name" value="MoaC_bact/euk"/>
</dbReference>
<dbReference type="InterPro" id="IPR036522">
    <property type="entry name" value="MoaC_sf"/>
</dbReference>
<dbReference type="InterPro" id="IPR050105">
    <property type="entry name" value="MoCo_biosynth_MoaA/MoaC"/>
</dbReference>
<dbReference type="InterPro" id="IPR002820">
    <property type="entry name" value="Mopterin_CF_biosynth-C_dom"/>
</dbReference>
<dbReference type="NCBIfam" id="TIGR00581">
    <property type="entry name" value="moaC"/>
    <property type="match status" value="1"/>
</dbReference>
<dbReference type="NCBIfam" id="NF006870">
    <property type="entry name" value="PRK09364.1"/>
    <property type="match status" value="1"/>
</dbReference>
<dbReference type="PANTHER" id="PTHR22960:SF29">
    <property type="entry name" value="CYCLIC PYRANOPTERIN MONOPHOSPHATE SYNTHASE"/>
    <property type="match status" value="1"/>
</dbReference>
<dbReference type="PANTHER" id="PTHR22960">
    <property type="entry name" value="MOLYBDOPTERIN COFACTOR SYNTHESIS PROTEIN A"/>
    <property type="match status" value="1"/>
</dbReference>
<dbReference type="Pfam" id="PF01967">
    <property type="entry name" value="MoaC"/>
    <property type="match status" value="1"/>
</dbReference>
<dbReference type="SUPFAM" id="SSF55040">
    <property type="entry name" value="Molybdenum cofactor biosynthesis protein C, MoaC"/>
    <property type="match status" value="1"/>
</dbReference>
<proteinExistence type="inferred from homology"/>
<keyword id="KW-0456">Lyase</keyword>
<keyword id="KW-0501">Molybdenum cofactor biosynthesis</keyword>
<keyword id="KW-1185">Reference proteome</keyword>